<comment type="function">
    <text evidence="1">Potential disease resistance protein.</text>
</comment>
<comment type="domain">
    <text evidence="1">The LRR repeats probably act as specificity determinant of pathogen recognition.</text>
</comment>
<comment type="similarity">
    <text evidence="3">Belongs to the disease resistance NB-LRR family.</text>
</comment>
<comment type="online information" name="NIB-LRRS">
    <link uri="http://niblrrs.ucdavis.edu"/>
    <text>Functional and comparative genomics of disease resistance gene homologs</text>
</comment>
<evidence type="ECO:0000250" key="1"/>
<evidence type="ECO:0000255" key="2"/>
<evidence type="ECO:0000305" key="3"/>
<proteinExistence type="inferred from homology"/>
<sequence>MGISFSIPFDPCVNKVSQWLDMKVSYTHNLEKNLVALETTMEELKAKRDDLLRKLKREEDRGLQTLGEIKVWLNRVETIESRVNDLLNARNAELQRLCLCGFCSKSLTTSYRYGKSVFLKLREVEKLERRVFEVISDQASTSEVEEQQLQPTIVGQETMLDNAWNHLMEDGVGIMGLYGMGGVGKTTLLTQINNKFSKYMCGFDSVIWVVVSKEVNVENILDEIAQKVHISGEKWDTKYKYQKGVYLYNFLRKMRFVLFLDDIWEKVNLVEIGVPFPTIKNKCKVVFTTRSLDVCTSMGVEKPMEVQCLADNDAYDLFQKKVGQITLGSDPEIRELSRVVAKKCCGLPLALNVVSETMSCKRTVQEWRHAIYVLNSYAAKFSGMDDKILPLLKYSYDSLKGEDVKMCLLYCALFPEDAKIRKENLIEYWICEEIIDGSEGIDKAENQGYEIIGSLVRASLLMEEVELDGANIVCLHDVVREMALWIASDLGKQNEAFIVRASVGLREILKVENWNVVRRMSLMKNNIAHLDGRLDCMELTTLLLQSTHLEKISSEFFNSMPKLAVLDLSGNYYLSELPNGISELVSLQYLNLSSTGIRHLPKGLQELKKLIHLYLERTSQLGSMVGISCLHNLKVLKLSGSSYAWDLDTVKELEALEHLEVLTTTIDDCTLGTDQFLSSHRLMSCIRFLKISNNSNRNRNSSRISLPVTMDRLQEFTIEHCHTSEIKMGRICSFSSLIEVNLSNCRRLRELTFLMFAPNLKRLHVVSSNQLEDIINKEKAHDGEKSGIVPFPKLNELHLYNLRELKNIYWSPLPFPCLEKINVMGCPNLKKLPLDSKSGKHGGNGLIITHREMEWITRVEWEDEATKTRFLANRSSFSSSLICFSNDLVSRDMNCFHL</sequence>
<organism>
    <name type="scientific">Arabidopsis thaliana</name>
    <name type="common">Mouse-ear cress</name>
    <dbReference type="NCBI Taxonomy" id="3702"/>
    <lineage>
        <taxon>Eukaryota</taxon>
        <taxon>Viridiplantae</taxon>
        <taxon>Streptophyta</taxon>
        <taxon>Embryophyta</taxon>
        <taxon>Tracheophyta</taxon>
        <taxon>Spermatophyta</taxon>
        <taxon>Magnoliopsida</taxon>
        <taxon>eudicotyledons</taxon>
        <taxon>Gunneridae</taxon>
        <taxon>Pentapetalae</taxon>
        <taxon>rosids</taxon>
        <taxon>malvids</taxon>
        <taxon>Brassicales</taxon>
        <taxon>Brassicaceae</taxon>
        <taxon>Camelineae</taxon>
        <taxon>Arabidopsis</taxon>
    </lineage>
</organism>
<keyword id="KW-0067">ATP-binding</keyword>
<keyword id="KW-0175">Coiled coil</keyword>
<keyword id="KW-0433">Leucine-rich repeat</keyword>
<keyword id="KW-0547">Nucleotide-binding</keyword>
<keyword id="KW-0611">Plant defense</keyword>
<keyword id="KW-1185">Reference proteome</keyword>
<keyword id="KW-0677">Repeat</keyword>
<gene>
    <name type="ordered locus">At1g63350</name>
    <name type="ORF">F2K11.24</name>
    <name type="ORF">F9N12.3</name>
</gene>
<name>DRL19_ARATH</name>
<reference key="1">
    <citation type="journal article" date="2000" name="Nature">
        <title>Sequence and analysis of chromosome 1 of the plant Arabidopsis thaliana.</title>
        <authorList>
            <person name="Theologis A."/>
            <person name="Ecker J.R."/>
            <person name="Palm C.J."/>
            <person name="Federspiel N.A."/>
            <person name="Kaul S."/>
            <person name="White O."/>
            <person name="Alonso J."/>
            <person name="Altafi H."/>
            <person name="Araujo R."/>
            <person name="Bowman C.L."/>
            <person name="Brooks S.Y."/>
            <person name="Buehler E."/>
            <person name="Chan A."/>
            <person name="Chao Q."/>
            <person name="Chen H."/>
            <person name="Cheuk R.F."/>
            <person name="Chin C.W."/>
            <person name="Chung M.K."/>
            <person name="Conn L."/>
            <person name="Conway A.B."/>
            <person name="Conway A.R."/>
            <person name="Creasy T.H."/>
            <person name="Dewar K."/>
            <person name="Dunn P."/>
            <person name="Etgu P."/>
            <person name="Feldblyum T.V."/>
            <person name="Feng J.-D."/>
            <person name="Fong B."/>
            <person name="Fujii C.Y."/>
            <person name="Gill J.E."/>
            <person name="Goldsmith A.D."/>
            <person name="Haas B."/>
            <person name="Hansen N.F."/>
            <person name="Hughes B."/>
            <person name="Huizar L."/>
            <person name="Hunter J.L."/>
            <person name="Jenkins J."/>
            <person name="Johnson-Hopson C."/>
            <person name="Khan S."/>
            <person name="Khaykin E."/>
            <person name="Kim C.J."/>
            <person name="Koo H.L."/>
            <person name="Kremenetskaia I."/>
            <person name="Kurtz D.B."/>
            <person name="Kwan A."/>
            <person name="Lam B."/>
            <person name="Langin-Hooper S."/>
            <person name="Lee A."/>
            <person name="Lee J.M."/>
            <person name="Lenz C.A."/>
            <person name="Li J.H."/>
            <person name="Li Y.-P."/>
            <person name="Lin X."/>
            <person name="Liu S.X."/>
            <person name="Liu Z.A."/>
            <person name="Luros J.S."/>
            <person name="Maiti R."/>
            <person name="Marziali A."/>
            <person name="Militscher J."/>
            <person name="Miranda M."/>
            <person name="Nguyen M."/>
            <person name="Nierman W.C."/>
            <person name="Osborne B.I."/>
            <person name="Pai G."/>
            <person name="Peterson J."/>
            <person name="Pham P.K."/>
            <person name="Rizzo M."/>
            <person name="Rooney T."/>
            <person name="Rowley D."/>
            <person name="Sakano H."/>
            <person name="Salzberg S.L."/>
            <person name="Schwartz J.R."/>
            <person name="Shinn P."/>
            <person name="Southwick A.M."/>
            <person name="Sun H."/>
            <person name="Tallon L.J."/>
            <person name="Tambunga G."/>
            <person name="Toriumi M.J."/>
            <person name="Town C.D."/>
            <person name="Utterback T."/>
            <person name="Van Aken S."/>
            <person name="Vaysberg M."/>
            <person name="Vysotskaia V.S."/>
            <person name="Walker M."/>
            <person name="Wu D."/>
            <person name="Yu G."/>
            <person name="Fraser C.M."/>
            <person name="Venter J.C."/>
            <person name="Davis R.W."/>
        </authorList>
    </citation>
    <scope>NUCLEOTIDE SEQUENCE [LARGE SCALE GENOMIC DNA]</scope>
    <source>
        <strain>cv. Columbia</strain>
    </source>
</reference>
<reference key="2">
    <citation type="journal article" date="2017" name="Plant J.">
        <title>Araport11: a complete reannotation of the Arabidopsis thaliana reference genome.</title>
        <authorList>
            <person name="Cheng C.Y."/>
            <person name="Krishnakumar V."/>
            <person name="Chan A.P."/>
            <person name="Thibaud-Nissen F."/>
            <person name="Schobel S."/>
            <person name="Town C.D."/>
        </authorList>
    </citation>
    <scope>GENOME REANNOTATION</scope>
    <source>
        <strain>cv. Columbia</strain>
    </source>
</reference>
<dbReference type="EMBL" id="AC022355">
    <property type="protein sequence ID" value="AAG52150.1"/>
    <property type="molecule type" value="Genomic_DNA"/>
</dbReference>
<dbReference type="EMBL" id="CP002684">
    <property type="protein sequence ID" value="AEE34089.1"/>
    <property type="molecule type" value="Genomic_DNA"/>
</dbReference>
<dbReference type="PIR" id="E96659">
    <property type="entry name" value="E96659"/>
</dbReference>
<dbReference type="RefSeq" id="NP_176524.1">
    <property type="nucleotide sequence ID" value="NM_105014.2"/>
</dbReference>
<dbReference type="SMR" id="Q9C8T9"/>
<dbReference type="FunCoup" id="Q9C8T9">
    <property type="interactions" value="18"/>
</dbReference>
<dbReference type="STRING" id="3702.Q9C8T9"/>
<dbReference type="iPTMnet" id="Q9C8T9"/>
<dbReference type="PaxDb" id="3702-AT1G63350.1"/>
<dbReference type="EnsemblPlants" id="AT1G63350.1">
    <property type="protein sequence ID" value="AT1G63350.1"/>
    <property type="gene ID" value="AT1G63350"/>
</dbReference>
<dbReference type="GeneID" id="842641"/>
<dbReference type="Gramene" id="AT1G63350.1">
    <property type="protein sequence ID" value="AT1G63350.1"/>
    <property type="gene ID" value="AT1G63350"/>
</dbReference>
<dbReference type="KEGG" id="ath:AT1G63350"/>
<dbReference type="Araport" id="AT1G63350"/>
<dbReference type="TAIR" id="AT1G63350"/>
<dbReference type="eggNOG" id="KOG4658">
    <property type="taxonomic scope" value="Eukaryota"/>
</dbReference>
<dbReference type="HOGENOM" id="CLU_000427_4_0_1"/>
<dbReference type="InParanoid" id="Q9C8T9"/>
<dbReference type="OMA" id="PFPNTEN"/>
<dbReference type="PhylomeDB" id="Q9C8T9"/>
<dbReference type="PRO" id="PR:Q9C8T9"/>
<dbReference type="Proteomes" id="UP000006548">
    <property type="component" value="Chromosome 1"/>
</dbReference>
<dbReference type="ExpressionAtlas" id="Q9C8T9">
    <property type="expression patterns" value="baseline and differential"/>
</dbReference>
<dbReference type="GO" id="GO:0043531">
    <property type="term" value="F:ADP binding"/>
    <property type="evidence" value="ECO:0007669"/>
    <property type="project" value="InterPro"/>
</dbReference>
<dbReference type="GO" id="GO:0005524">
    <property type="term" value="F:ATP binding"/>
    <property type="evidence" value="ECO:0007669"/>
    <property type="project" value="UniProtKB-KW"/>
</dbReference>
<dbReference type="GO" id="GO:0006952">
    <property type="term" value="P:defense response"/>
    <property type="evidence" value="ECO:0007669"/>
    <property type="project" value="UniProtKB-KW"/>
</dbReference>
<dbReference type="FunFam" id="3.80.10.10:FF:000861">
    <property type="entry name" value="Disease resistance protein (CC-NBS-LRR class) family"/>
    <property type="match status" value="1"/>
</dbReference>
<dbReference type="FunFam" id="3.40.50.300:FF:001091">
    <property type="entry name" value="Probable disease resistance protein At1g61300"/>
    <property type="match status" value="1"/>
</dbReference>
<dbReference type="FunFam" id="1.10.10.10:FF:000322">
    <property type="entry name" value="Probable disease resistance protein At1g63360"/>
    <property type="match status" value="1"/>
</dbReference>
<dbReference type="FunFam" id="3.80.10.10:FF:000799">
    <property type="entry name" value="Probable disease resistance protein At5g63020"/>
    <property type="match status" value="1"/>
</dbReference>
<dbReference type="FunFam" id="1.10.8.430:FF:000003">
    <property type="entry name" value="Probable disease resistance protein At5g66910"/>
    <property type="match status" value="1"/>
</dbReference>
<dbReference type="Gene3D" id="1.10.8.430">
    <property type="entry name" value="Helical domain of apoptotic protease-activating factors"/>
    <property type="match status" value="1"/>
</dbReference>
<dbReference type="Gene3D" id="3.40.50.300">
    <property type="entry name" value="P-loop containing nucleotide triphosphate hydrolases"/>
    <property type="match status" value="1"/>
</dbReference>
<dbReference type="Gene3D" id="3.80.10.10">
    <property type="entry name" value="Ribonuclease Inhibitor"/>
    <property type="match status" value="2"/>
</dbReference>
<dbReference type="Gene3D" id="1.10.10.10">
    <property type="entry name" value="Winged helix-like DNA-binding domain superfamily/Winged helix DNA-binding domain"/>
    <property type="match status" value="1"/>
</dbReference>
<dbReference type="InterPro" id="IPR042197">
    <property type="entry name" value="Apaf_helical"/>
</dbReference>
<dbReference type="InterPro" id="IPR032675">
    <property type="entry name" value="LRR_dom_sf"/>
</dbReference>
<dbReference type="InterPro" id="IPR055414">
    <property type="entry name" value="LRR_R13L4/SHOC2-like"/>
</dbReference>
<dbReference type="InterPro" id="IPR002182">
    <property type="entry name" value="NB-ARC"/>
</dbReference>
<dbReference type="InterPro" id="IPR027417">
    <property type="entry name" value="P-loop_NTPase"/>
</dbReference>
<dbReference type="InterPro" id="IPR050905">
    <property type="entry name" value="Plant_NBS-LRR"/>
</dbReference>
<dbReference type="InterPro" id="IPR036388">
    <property type="entry name" value="WH-like_DNA-bd_sf"/>
</dbReference>
<dbReference type="PANTHER" id="PTHR33463:SF210">
    <property type="entry name" value="NB-ARC DOMAIN-CONTAINING PROTEIN"/>
    <property type="match status" value="1"/>
</dbReference>
<dbReference type="PANTHER" id="PTHR33463">
    <property type="entry name" value="NB-ARC DOMAIN-CONTAINING PROTEIN-RELATED"/>
    <property type="match status" value="1"/>
</dbReference>
<dbReference type="Pfam" id="PF23598">
    <property type="entry name" value="LRR_14"/>
    <property type="match status" value="1"/>
</dbReference>
<dbReference type="Pfam" id="PF00931">
    <property type="entry name" value="NB-ARC"/>
    <property type="match status" value="1"/>
</dbReference>
<dbReference type="Pfam" id="PF23559">
    <property type="entry name" value="WH_DRP"/>
    <property type="match status" value="1"/>
</dbReference>
<dbReference type="PRINTS" id="PR00364">
    <property type="entry name" value="DISEASERSIST"/>
</dbReference>
<dbReference type="SUPFAM" id="SSF52058">
    <property type="entry name" value="L domain-like"/>
    <property type="match status" value="1"/>
</dbReference>
<dbReference type="SUPFAM" id="SSF52540">
    <property type="entry name" value="P-loop containing nucleoside triphosphate hydrolases"/>
    <property type="match status" value="1"/>
</dbReference>
<accession>Q9C8T9</accession>
<feature type="chain" id="PRO_0000212751" description="Putative disease resistance protein At1g63350">
    <location>
        <begin position="1"/>
        <end position="898"/>
    </location>
</feature>
<feature type="domain" description="NB-ARC">
    <location>
        <begin position="137"/>
        <end position="440"/>
    </location>
</feature>
<feature type="repeat" description="LRR 1">
    <location>
        <begin position="516"/>
        <end position="537"/>
    </location>
</feature>
<feature type="repeat" description="LRR 2">
    <location>
        <begin position="538"/>
        <end position="559"/>
    </location>
</feature>
<feature type="repeat" description="LRR 3">
    <location>
        <begin position="562"/>
        <end position="584"/>
    </location>
</feature>
<feature type="repeat" description="LRR 4">
    <location>
        <begin position="586"/>
        <end position="608"/>
    </location>
</feature>
<feature type="repeat" description="LRR 5">
    <location>
        <begin position="609"/>
        <end position="631"/>
    </location>
</feature>
<feature type="repeat" description="LRR 6">
    <location>
        <begin position="632"/>
        <end position="654"/>
    </location>
</feature>
<feature type="coiled-coil region" evidence="2">
    <location>
        <begin position="24"/>
        <end position="88"/>
    </location>
</feature>
<feature type="binding site" evidence="2">
    <location>
        <begin position="179"/>
        <end position="186"/>
    </location>
    <ligand>
        <name>ATP</name>
        <dbReference type="ChEBI" id="CHEBI:30616"/>
    </ligand>
</feature>
<protein>
    <recommendedName>
        <fullName>Putative disease resistance protein At1g63350</fullName>
    </recommendedName>
</protein>